<evidence type="ECO:0000255" key="1">
    <source>
        <dbReference type="HAMAP-Rule" id="MF_00416"/>
    </source>
</evidence>
<gene>
    <name evidence="1" type="primary">flgI2</name>
    <name type="ordered locus">bll6871</name>
</gene>
<keyword id="KW-0975">Bacterial flagellum</keyword>
<keyword id="KW-0574">Periplasm</keyword>
<keyword id="KW-1185">Reference proteome</keyword>
<keyword id="KW-0732">Signal</keyword>
<accession>Q89F30</accession>
<dbReference type="EMBL" id="BA000040">
    <property type="protein sequence ID" value="BAC52136.1"/>
    <property type="molecule type" value="Genomic_DNA"/>
</dbReference>
<dbReference type="RefSeq" id="NP_773511.1">
    <property type="nucleotide sequence ID" value="NC_004463.1"/>
</dbReference>
<dbReference type="RefSeq" id="WP_011089609.1">
    <property type="nucleotide sequence ID" value="NC_004463.1"/>
</dbReference>
<dbReference type="SMR" id="Q89F30"/>
<dbReference type="FunCoup" id="Q89F30">
    <property type="interactions" value="66"/>
</dbReference>
<dbReference type="STRING" id="224911.AAV28_31945"/>
<dbReference type="EnsemblBacteria" id="BAC52136">
    <property type="protein sequence ID" value="BAC52136"/>
    <property type="gene ID" value="BAC52136"/>
</dbReference>
<dbReference type="GeneID" id="46493841"/>
<dbReference type="KEGG" id="bja:bll6871"/>
<dbReference type="PATRIC" id="fig|224911.44.peg.6901"/>
<dbReference type="eggNOG" id="COG1706">
    <property type="taxonomic scope" value="Bacteria"/>
</dbReference>
<dbReference type="HOGENOM" id="CLU_045235_1_0_5"/>
<dbReference type="InParanoid" id="Q89F30"/>
<dbReference type="OrthoDB" id="9786431at2"/>
<dbReference type="PhylomeDB" id="Q89F30"/>
<dbReference type="Proteomes" id="UP000002526">
    <property type="component" value="Chromosome"/>
</dbReference>
<dbReference type="GO" id="GO:0009428">
    <property type="term" value="C:bacterial-type flagellum basal body, distal rod, P ring"/>
    <property type="evidence" value="ECO:0000318"/>
    <property type="project" value="GO_Central"/>
</dbReference>
<dbReference type="GO" id="GO:0030288">
    <property type="term" value="C:outer membrane-bounded periplasmic space"/>
    <property type="evidence" value="ECO:0007669"/>
    <property type="project" value="InterPro"/>
</dbReference>
<dbReference type="GO" id="GO:0005198">
    <property type="term" value="F:structural molecule activity"/>
    <property type="evidence" value="ECO:0007669"/>
    <property type="project" value="InterPro"/>
</dbReference>
<dbReference type="GO" id="GO:0071973">
    <property type="term" value="P:bacterial-type flagellum-dependent cell motility"/>
    <property type="evidence" value="ECO:0000318"/>
    <property type="project" value="GO_Central"/>
</dbReference>
<dbReference type="HAMAP" id="MF_00416">
    <property type="entry name" value="FlgI"/>
    <property type="match status" value="1"/>
</dbReference>
<dbReference type="InterPro" id="IPR001782">
    <property type="entry name" value="Flag_FlgI"/>
</dbReference>
<dbReference type="NCBIfam" id="NF003676">
    <property type="entry name" value="PRK05303.1"/>
    <property type="match status" value="1"/>
</dbReference>
<dbReference type="NCBIfam" id="NF009430">
    <property type="entry name" value="PRK12789.1"/>
    <property type="match status" value="1"/>
</dbReference>
<dbReference type="PANTHER" id="PTHR30381">
    <property type="entry name" value="FLAGELLAR P-RING PERIPLASMIC PROTEIN FLGI"/>
    <property type="match status" value="1"/>
</dbReference>
<dbReference type="PANTHER" id="PTHR30381:SF0">
    <property type="entry name" value="FLAGELLAR P-RING PROTEIN"/>
    <property type="match status" value="1"/>
</dbReference>
<dbReference type="Pfam" id="PF02119">
    <property type="entry name" value="FlgI"/>
    <property type="match status" value="1"/>
</dbReference>
<dbReference type="PRINTS" id="PR01010">
    <property type="entry name" value="FLGPRINGFLGI"/>
</dbReference>
<protein>
    <recommendedName>
        <fullName evidence="1">Flagellar P-ring protein 2</fullName>
    </recommendedName>
    <alternativeName>
        <fullName evidence="1">Basal body P-ring protein 2</fullName>
    </alternativeName>
</protein>
<name>FLGI2_BRADU</name>
<organism>
    <name type="scientific">Bradyrhizobium diazoefficiens (strain JCM 10833 / BCRC 13528 / IAM 13628 / NBRC 14792 / USDA 110)</name>
    <dbReference type="NCBI Taxonomy" id="224911"/>
    <lineage>
        <taxon>Bacteria</taxon>
        <taxon>Pseudomonadati</taxon>
        <taxon>Pseudomonadota</taxon>
        <taxon>Alphaproteobacteria</taxon>
        <taxon>Hyphomicrobiales</taxon>
        <taxon>Nitrobacteraceae</taxon>
        <taxon>Bradyrhizobium</taxon>
    </lineage>
</organism>
<proteinExistence type="inferred from homology"/>
<reference key="1">
    <citation type="journal article" date="2002" name="DNA Res.">
        <title>Complete genomic sequence of nitrogen-fixing symbiotic bacterium Bradyrhizobium japonicum USDA110.</title>
        <authorList>
            <person name="Kaneko T."/>
            <person name="Nakamura Y."/>
            <person name="Sato S."/>
            <person name="Minamisawa K."/>
            <person name="Uchiumi T."/>
            <person name="Sasamoto S."/>
            <person name="Watanabe A."/>
            <person name="Idesawa K."/>
            <person name="Iriguchi M."/>
            <person name="Kawashima K."/>
            <person name="Kohara M."/>
            <person name="Matsumoto M."/>
            <person name="Shimpo S."/>
            <person name="Tsuruoka H."/>
            <person name="Wada T."/>
            <person name="Yamada M."/>
            <person name="Tabata S."/>
        </authorList>
    </citation>
    <scope>NUCLEOTIDE SEQUENCE [LARGE SCALE GENOMIC DNA]</scope>
    <source>
        <strain>JCM 10833 / BCRC 13528 / IAM 13628 / NBRC 14792 / USDA 110</strain>
    </source>
</reference>
<sequence>MTRLLLALILVVSAASAQAAVRIKDIADIKGLRENQIVGYGLVIGLNGTGDTLRNAPFTEQSLQSMLENMGINVRNETTSTTNPARPTTLRTRNVAAVMVTADLQPSIGAGERMDVTVSSLGDATSLLGGTLVMTSLRAADGAVYAVAQGAVTVAGYSVGGQAQNVSQGTPTAGRILNGALVEREVQGSLHEMEFLVLELKNPDFVTATRILDAINRYAGGRYRAQIAFERDYRTIVLSKPRHIGPVRFLAEIGELTVEPDTPARVVINERTGTVVIGRDVRISTVAVTHGNLTVRVTEMPVVSQPAPFSRGQTVVVPQTVVEANEAGSQVAILSGVDLQRLVRGLNQIGLKPSGIIAILQAIKTAGALQADVIVQ</sequence>
<feature type="signal peptide" evidence="1">
    <location>
        <begin position="1"/>
        <end position="19"/>
    </location>
</feature>
<feature type="chain" id="PRO_0000041788" description="Flagellar P-ring protein 2">
    <location>
        <begin position="20"/>
        <end position="376"/>
    </location>
</feature>
<comment type="function">
    <text evidence="1">Assembles around the rod to form the L-ring and probably protects the motor/basal body from shearing forces during rotation.</text>
</comment>
<comment type="subunit">
    <text evidence="1">The basal body constitutes a major portion of the flagellar organelle and consists of four rings (L,P,S, and M) mounted on a central rod.</text>
</comment>
<comment type="subcellular location">
    <subcellularLocation>
        <location evidence="1">Periplasm</location>
    </subcellularLocation>
    <subcellularLocation>
        <location evidence="1">Bacterial flagellum basal body</location>
    </subcellularLocation>
</comment>
<comment type="similarity">
    <text evidence="1">Belongs to the FlgI family.</text>
</comment>